<reference key="1">
    <citation type="journal article" date="1996" name="Science">
        <title>Complete genome sequence of the methanogenic archaeon, Methanococcus jannaschii.</title>
        <authorList>
            <person name="Bult C.J."/>
            <person name="White O."/>
            <person name="Olsen G.J."/>
            <person name="Zhou L."/>
            <person name="Fleischmann R.D."/>
            <person name="Sutton G.G."/>
            <person name="Blake J.A."/>
            <person name="FitzGerald L.M."/>
            <person name="Clayton R.A."/>
            <person name="Gocayne J.D."/>
            <person name="Kerlavage A.R."/>
            <person name="Dougherty B.A."/>
            <person name="Tomb J.-F."/>
            <person name="Adams M.D."/>
            <person name="Reich C.I."/>
            <person name="Overbeek R."/>
            <person name="Kirkness E.F."/>
            <person name="Weinstock K.G."/>
            <person name="Merrick J.M."/>
            <person name="Glodek A."/>
            <person name="Scott J.L."/>
            <person name="Geoghagen N.S.M."/>
            <person name="Weidman J.F."/>
            <person name="Fuhrmann J.L."/>
            <person name="Nguyen D."/>
            <person name="Utterback T.R."/>
            <person name="Kelley J.M."/>
            <person name="Peterson J.D."/>
            <person name="Sadow P.W."/>
            <person name="Hanna M.C."/>
            <person name="Cotton M.D."/>
            <person name="Roberts K.M."/>
            <person name="Hurst M.A."/>
            <person name="Kaine B.P."/>
            <person name="Borodovsky M."/>
            <person name="Klenk H.-P."/>
            <person name="Fraser C.M."/>
            <person name="Smith H.O."/>
            <person name="Woese C.R."/>
            <person name="Venter J.C."/>
        </authorList>
    </citation>
    <scope>NUCLEOTIDE SEQUENCE [LARGE SCALE GENOMIC DNA]</scope>
    <source>
        <strain>ATCC 43067 / DSM 2661 / JAL-1 / JCM 10045 / NBRC 100440</strain>
    </source>
</reference>
<comment type="similarity">
    <text evidence="1">Belongs to the eukaryotic ribosomal protein eL39 family.</text>
</comment>
<comment type="sequence caution" evidence="1">
    <conflict type="erroneous initiation">
        <sequence resource="EMBL-CDS" id="AAB98684"/>
    </conflict>
</comment>
<evidence type="ECO:0000305" key="1"/>
<organism>
    <name type="scientific">Methanocaldococcus jannaschii (strain ATCC 43067 / DSM 2661 / JAL-1 / JCM 10045 / NBRC 100440)</name>
    <name type="common">Methanococcus jannaschii</name>
    <dbReference type="NCBI Taxonomy" id="243232"/>
    <lineage>
        <taxon>Archaea</taxon>
        <taxon>Methanobacteriati</taxon>
        <taxon>Methanobacteriota</taxon>
        <taxon>Methanomada group</taxon>
        <taxon>Methanococci</taxon>
        <taxon>Methanococcales</taxon>
        <taxon>Methanocaldococcaceae</taxon>
        <taxon>Methanocaldococcus</taxon>
    </lineage>
</organism>
<feature type="chain" id="PRO_0000127050" description="Large ribosomal subunit protein eL39">
    <location>
        <begin position="1"/>
        <end position="51"/>
    </location>
</feature>
<gene>
    <name type="primary">rpl39e</name>
    <name type="ordered locus">MJ0689</name>
</gene>
<keyword id="KW-1185">Reference proteome</keyword>
<keyword id="KW-0687">Ribonucleoprotein</keyword>
<keyword id="KW-0689">Ribosomal protein</keyword>
<sequence>MGSNKPLGKKVRLAKALKQNRRVPLFVIVKTRGRVRFHPKMRYWRRKKLKA</sequence>
<name>RL39_METJA</name>
<protein>
    <recommendedName>
        <fullName evidence="1">Large ribosomal subunit protein eL39</fullName>
    </recommendedName>
    <alternativeName>
        <fullName>50S ribosomal protein L39e</fullName>
    </alternativeName>
</protein>
<proteinExistence type="inferred from homology"/>
<accession>P54056</accession>
<dbReference type="EMBL" id="L77117">
    <property type="protein sequence ID" value="AAB98684.1"/>
    <property type="status" value="ALT_INIT"/>
    <property type="molecule type" value="Genomic_DNA"/>
</dbReference>
<dbReference type="PIR" id="A64386">
    <property type="entry name" value="A64386"/>
</dbReference>
<dbReference type="RefSeq" id="WP_064496580.1">
    <property type="nucleotide sequence ID" value="NC_000909.1"/>
</dbReference>
<dbReference type="FunCoup" id="P54056">
    <property type="interactions" value="90"/>
</dbReference>
<dbReference type="STRING" id="243232.MJ_0689"/>
<dbReference type="PaxDb" id="243232-MJ_0689"/>
<dbReference type="EnsemblBacteria" id="AAB98684">
    <property type="protein sequence ID" value="AAB98684"/>
    <property type="gene ID" value="MJ_0689"/>
</dbReference>
<dbReference type="GeneID" id="1451555"/>
<dbReference type="KEGG" id="mja:MJ_0689"/>
<dbReference type="eggNOG" id="arCOG04177">
    <property type="taxonomic scope" value="Archaea"/>
</dbReference>
<dbReference type="HOGENOM" id="CLU_181948_4_0_2"/>
<dbReference type="InParanoid" id="P54056"/>
<dbReference type="OrthoDB" id="65016at2157"/>
<dbReference type="PhylomeDB" id="P54056"/>
<dbReference type="Proteomes" id="UP000000805">
    <property type="component" value="Chromosome"/>
</dbReference>
<dbReference type="GO" id="GO:0022625">
    <property type="term" value="C:cytosolic large ribosomal subunit"/>
    <property type="evidence" value="ECO:0000318"/>
    <property type="project" value="GO_Central"/>
</dbReference>
<dbReference type="GO" id="GO:0003735">
    <property type="term" value="F:structural constituent of ribosome"/>
    <property type="evidence" value="ECO:0007669"/>
    <property type="project" value="InterPro"/>
</dbReference>
<dbReference type="GO" id="GO:0006412">
    <property type="term" value="P:translation"/>
    <property type="evidence" value="ECO:0007669"/>
    <property type="project" value="UniProtKB-UniRule"/>
</dbReference>
<dbReference type="FunFam" id="1.10.1620.10:FF:000001">
    <property type="entry name" value="60S ribosomal protein-like L39"/>
    <property type="match status" value="1"/>
</dbReference>
<dbReference type="Gene3D" id="1.10.1620.10">
    <property type="entry name" value="Ribosomal protein L39e"/>
    <property type="match status" value="1"/>
</dbReference>
<dbReference type="HAMAP" id="MF_00629">
    <property type="entry name" value="Ribosomal_eL39"/>
    <property type="match status" value="1"/>
</dbReference>
<dbReference type="InterPro" id="IPR000077">
    <property type="entry name" value="Ribosomal_eL39"/>
</dbReference>
<dbReference type="InterPro" id="IPR020083">
    <property type="entry name" value="Ribosomal_eL39_CS"/>
</dbReference>
<dbReference type="InterPro" id="IPR023626">
    <property type="entry name" value="Ribosomal_eL39_dom_sf"/>
</dbReference>
<dbReference type="NCBIfam" id="NF002316">
    <property type="entry name" value="PRK01242.1"/>
    <property type="match status" value="1"/>
</dbReference>
<dbReference type="Pfam" id="PF00832">
    <property type="entry name" value="Ribosomal_L39"/>
    <property type="match status" value="1"/>
</dbReference>
<dbReference type="SUPFAM" id="SSF48662">
    <property type="entry name" value="Ribosomal protein L39e"/>
    <property type="match status" value="1"/>
</dbReference>
<dbReference type="PROSITE" id="PS00051">
    <property type="entry name" value="RIBOSOMAL_L39E"/>
    <property type="match status" value="1"/>
</dbReference>